<name>Y097_MYCSK</name>
<protein>
    <recommendedName>
        <fullName>Putative S-adenosyl-L-methionine-dependent methyltransferase Mkms_0097</fullName>
        <ecNumber>2.1.1.-</ecNumber>
    </recommendedName>
</protein>
<keyword id="KW-0489">Methyltransferase</keyword>
<keyword id="KW-0949">S-adenosyl-L-methionine</keyword>
<keyword id="KW-0808">Transferase</keyword>
<feature type="chain" id="PRO_0000361208" description="Putative S-adenosyl-L-methionine-dependent methyltransferase Mkms_0097">
    <location>
        <begin position="1"/>
        <end position="312"/>
    </location>
</feature>
<feature type="binding site" evidence="1">
    <location>
        <position position="134"/>
    </location>
    <ligand>
        <name>S-adenosyl-L-methionine</name>
        <dbReference type="ChEBI" id="CHEBI:59789"/>
    </ligand>
</feature>
<feature type="binding site" evidence="1">
    <location>
        <begin position="163"/>
        <end position="164"/>
    </location>
    <ligand>
        <name>S-adenosyl-L-methionine</name>
        <dbReference type="ChEBI" id="CHEBI:59789"/>
    </ligand>
</feature>
<sequence>MSSLRTADDTWDIATSVGSTAVMVAASRAAETERDEALIRDPYARLLVTGAGTGIWESVLDAKFVETVAAADAEAAAIFEHMISYQAVRTHFFDAFFTAAAEAGIRQIVILASGLDSRAYRLDWPSGTTVYEIDQPKVLEYKSATLAEHGVEPAATRREVGIDLRHDWPAALRGAGFDPSRPTAWLAEGLLMYLPADAQDRLFEQITELSAPGSRVAAETAGVQAEDRRQQMRERFERIAEKFDMTASLDIQQLIYEDPDRADVADWLDAHGWTATAVSSQQEMRRLDRWALPADLTDDDAFSNFVTAEKQS</sequence>
<organism>
    <name type="scientific">Mycobacterium sp. (strain KMS)</name>
    <dbReference type="NCBI Taxonomy" id="189918"/>
    <lineage>
        <taxon>Bacteria</taxon>
        <taxon>Bacillati</taxon>
        <taxon>Actinomycetota</taxon>
        <taxon>Actinomycetes</taxon>
        <taxon>Mycobacteriales</taxon>
        <taxon>Mycobacteriaceae</taxon>
        <taxon>Mycobacterium</taxon>
    </lineage>
</organism>
<reference key="1">
    <citation type="submission" date="2006-12" db="EMBL/GenBank/DDBJ databases">
        <title>Complete sequence of chromosome of Mycobacterium sp. KMS.</title>
        <authorList>
            <consortium name="US DOE Joint Genome Institute"/>
            <person name="Copeland A."/>
            <person name="Lucas S."/>
            <person name="Lapidus A."/>
            <person name="Barry K."/>
            <person name="Detter J.C."/>
            <person name="Glavina del Rio T."/>
            <person name="Hammon N."/>
            <person name="Israni S."/>
            <person name="Dalin E."/>
            <person name="Tice H."/>
            <person name="Pitluck S."/>
            <person name="Kiss H."/>
            <person name="Brettin T."/>
            <person name="Bruce D."/>
            <person name="Han C."/>
            <person name="Tapia R."/>
            <person name="Gilna P."/>
            <person name="Schmutz J."/>
            <person name="Larimer F."/>
            <person name="Land M."/>
            <person name="Hauser L."/>
            <person name="Kyrpides N."/>
            <person name="Mikhailova N."/>
            <person name="Miller C.D."/>
            <person name="Richardson P."/>
        </authorList>
    </citation>
    <scope>NUCLEOTIDE SEQUENCE [LARGE SCALE GENOMIC DNA]</scope>
    <source>
        <strain>KMS</strain>
    </source>
</reference>
<gene>
    <name type="ordered locus">Mkms_0097</name>
</gene>
<evidence type="ECO:0000250" key="1"/>
<evidence type="ECO:0000305" key="2"/>
<accession>A1U908</accession>
<proteinExistence type="inferred from homology"/>
<comment type="function">
    <text evidence="1">Exhibits S-adenosyl-L-methionine-dependent methyltransferase activity.</text>
</comment>
<comment type="similarity">
    <text evidence="2">Belongs to the UPF0677 family.</text>
</comment>
<dbReference type="EC" id="2.1.1.-"/>
<dbReference type="EMBL" id="CP000518">
    <property type="protein sequence ID" value="ABL89316.1"/>
    <property type="molecule type" value="Genomic_DNA"/>
</dbReference>
<dbReference type="SMR" id="A1U908"/>
<dbReference type="STRING" id="189918.Mkms_0097"/>
<dbReference type="KEGG" id="mkm:Mkms_0097"/>
<dbReference type="HOGENOM" id="CLU_056160_2_1_11"/>
<dbReference type="OrthoDB" id="9806164at2"/>
<dbReference type="GO" id="GO:0008168">
    <property type="term" value="F:methyltransferase activity"/>
    <property type="evidence" value="ECO:0007669"/>
    <property type="project" value="UniProtKB-KW"/>
</dbReference>
<dbReference type="GO" id="GO:0032259">
    <property type="term" value="P:methylation"/>
    <property type="evidence" value="ECO:0007669"/>
    <property type="project" value="UniProtKB-KW"/>
</dbReference>
<dbReference type="FunFam" id="3.40.50.150:FF:000152">
    <property type="entry name" value="S-adenosyl-L-methionine-dependent methyltransferase"/>
    <property type="match status" value="1"/>
</dbReference>
<dbReference type="Gene3D" id="3.40.50.150">
    <property type="entry name" value="Vaccinia Virus protein VP39"/>
    <property type="match status" value="1"/>
</dbReference>
<dbReference type="InterPro" id="IPR007213">
    <property type="entry name" value="Ppm1/Ppm2/Tcmp"/>
</dbReference>
<dbReference type="InterPro" id="IPR029063">
    <property type="entry name" value="SAM-dependent_MTases_sf"/>
</dbReference>
<dbReference type="InterPro" id="IPR011610">
    <property type="entry name" value="SAM_mthyl_Trfase_ML2640-like"/>
</dbReference>
<dbReference type="NCBIfam" id="TIGR00027">
    <property type="entry name" value="mthyl_TIGR00027"/>
    <property type="match status" value="1"/>
</dbReference>
<dbReference type="PANTHER" id="PTHR43619">
    <property type="entry name" value="S-ADENOSYL-L-METHIONINE-DEPENDENT METHYLTRANSFERASE YKTD-RELATED"/>
    <property type="match status" value="1"/>
</dbReference>
<dbReference type="PANTHER" id="PTHR43619:SF2">
    <property type="entry name" value="S-ADENOSYL-L-METHIONINE-DEPENDENT METHYLTRANSFERASES SUPERFAMILY PROTEIN"/>
    <property type="match status" value="1"/>
</dbReference>
<dbReference type="Pfam" id="PF04072">
    <property type="entry name" value="LCM"/>
    <property type="match status" value="1"/>
</dbReference>
<dbReference type="SUPFAM" id="SSF53335">
    <property type="entry name" value="S-adenosyl-L-methionine-dependent methyltransferases"/>
    <property type="match status" value="1"/>
</dbReference>